<organism>
    <name type="scientific">Rattus norvegicus</name>
    <name type="common">Rat</name>
    <dbReference type="NCBI Taxonomy" id="10116"/>
    <lineage>
        <taxon>Eukaryota</taxon>
        <taxon>Metazoa</taxon>
        <taxon>Chordata</taxon>
        <taxon>Craniata</taxon>
        <taxon>Vertebrata</taxon>
        <taxon>Euteleostomi</taxon>
        <taxon>Mammalia</taxon>
        <taxon>Eutheria</taxon>
        <taxon>Euarchontoglires</taxon>
        <taxon>Glires</taxon>
        <taxon>Rodentia</taxon>
        <taxon>Myomorpha</taxon>
        <taxon>Muroidea</taxon>
        <taxon>Muridae</taxon>
        <taxon>Murinae</taxon>
        <taxon>Rattus</taxon>
    </lineage>
</organism>
<reference key="1">
    <citation type="journal article" date="2004" name="Genome Res.">
        <title>The status, quality, and expansion of the NIH full-length cDNA project: the Mammalian Gene Collection (MGC).</title>
        <authorList>
            <consortium name="The MGC Project Team"/>
        </authorList>
    </citation>
    <scope>NUCLEOTIDE SEQUENCE [LARGE SCALE MRNA]</scope>
    <source>
        <tissue>Testis</tissue>
    </source>
</reference>
<feature type="chain" id="PRO_0000283030" description="Beta-galactosidase-1-like protein 3">
    <location>
        <begin position="1"/>
        <end position="631"/>
    </location>
</feature>
<feature type="active site" description="Proton donor" evidence="1">
    <location>
        <position position="203"/>
    </location>
</feature>
<feature type="active site" description="Nucleophile" evidence="1">
    <location>
        <position position="277"/>
    </location>
</feature>
<accession>Q5XIL5</accession>
<comment type="similarity">
    <text evidence="2">Belongs to the glycosyl hydrolase 35 family.</text>
</comment>
<proteinExistence type="evidence at transcript level"/>
<dbReference type="EC" id="3.2.1.-"/>
<dbReference type="EMBL" id="BC083665">
    <property type="protein sequence ID" value="AAH83665.1"/>
    <property type="molecule type" value="mRNA"/>
</dbReference>
<dbReference type="RefSeq" id="NP_001019529.2">
    <property type="nucleotide sequence ID" value="NM_001024358.1"/>
</dbReference>
<dbReference type="SMR" id="Q5XIL5"/>
<dbReference type="STRING" id="10116.ENSRNOP00000010045"/>
<dbReference type="CAZy" id="GH35">
    <property type="family name" value="Glycoside Hydrolase Family 35"/>
</dbReference>
<dbReference type="PhosphoSitePlus" id="Q5XIL5"/>
<dbReference type="PaxDb" id="10116-ENSRNOP00000010045"/>
<dbReference type="GeneID" id="500961"/>
<dbReference type="KEGG" id="rno:500961"/>
<dbReference type="UCSC" id="RGD:1561462">
    <property type="organism name" value="rat"/>
</dbReference>
<dbReference type="AGR" id="RGD:1561462"/>
<dbReference type="CTD" id="112937"/>
<dbReference type="RGD" id="1561462">
    <property type="gene designation" value="Glb1l3"/>
</dbReference>
<dbReference type="eggNOG" id="KOG0496">
    <property type="taxonomic scope" value="Eukaryota"/>
</dbReference>
<dbReference type="InParanoid" id="Q5XIL5"/>
<dbReference type="OrthoDB" id="1657402at2759"/>
<dbReference type="PhylomeDB" id="Q5XIL5"/>
<dbReference type="Reactome" id="R-RNO-2022857">
    <property type="pathway name" value="Keratan sulfate degradation"/>
</dbReference>
<dbReference type="Reactome" id="R-RNO-2024096">
    <property type="pathway name" value="HS-GAG degradation"/>
</dbReference>
<dbReference type="Reactome" id="R-RNO-9840310">
    <property type="pathway name" value="Glycosphingolipid catabolism"/>
</dbReference>
<dbReference type="PRO" id="PR:Q5XIL5"/>
<dbReference type="Proteomes" id="UP000002494">
    <property type="component" value="Unplaced"/>
</dbReference>
<dbReference type="GO" id="GO:0005773">
    <property type="term" value="C:vacuole"/>
    <property type="evidence" value="ECO:0000318"/>
    <property type="project" value="GO_Central"/>
</dbReference>
<dbReference type="GO" id="GO:0004565">
    <property type="term" value="F:beta-galactosidase activity"/>
    <property type="evidence" value="ECO:0000318"/>
    <property type="project" value="GO_Central"/>
</dbReference>
<dbReference type="GO" id="GO:0019388">
    <property type="term" value="P:galactose catabolic process"/>
    <property type="evidence" value="ECO:0000318"/>
    <property type="project" value="GO_Central"/>
</dbReference>
<dbReference type="FunFam" id="2.60.120.260:FF:000049">
    <property type="entry name" value="Beta-galactosidase"/>
    <property type="match status" value="1"/>
</dbReference>
<dbReference type="FunFam" id="3.20.20.80:FF:000036">
    <property type="entry name" value="Beta-galactosidase"/>
    <property type="match status" value="1"/>
</dbReference>
<dbReference type="Gene3D" id="2.60.120.260">
    <property type="entry name" value="Galactose-binding domain-like"/>
    <property type="match status" value="2"/>
</dbReference>
<dbReference type="Gene3D" id="3.20.20.80">
    <property type="entry name" value="Glycosidases"/>
    <property type="match status" value="1"/>
</dbReference>
<dbReference type="InterPro" id="IPR026283">
    <property type="entry name" value="B-gal_1-like"/>
</dbReference>
<dbReference type="InterPro" id="IPR048912">
    <property type="entry name" value="BetaGal1-like_ABD1"/>
</dbReference>
<dbReference type="InterPro" id="IPR048913">
    <property type="entry name" value="BetaGal_gal-bd"/>
</dbReference>
<dbReference type="InterPro" id="IPR008979">
    <property type="entry name" value="Galactose-bd-like_sf"/>
</dbReference>
<dbReference type="InterPro" id="IPR031330">
    <property type="entry name" value="Gly_Hdrlase_35_cat"/>
</dbReference>
<dbReference type="InterPro" id="IPR019801">
    <property type="entry name" value="Glyco_hydro_35_CS"/>
</dbReference>
<dbReference type="InterPro" id="IPR001944">
    <property type="entry name" value="Glycoside_Hdrlase_35"/>
</dbReference>
<dbReference type="InterPro" id="IPR017853">
    <property type="entry name" value="Glycoside_hydrolase_SF"/>
</dbReference>
<dbReference type="PANTHER" id="PTHR23421">
    <property type="entry name" value="BETA-GALACTOSIDASE RELATED"/>
    <property type="match status" value="1"/>
</dbReference>
<dbReference type="Pfam" id="PF21317">
    <property type="entry name" value="BetaGal_ABD_1"/>
    <property type="match status" value="1"/>
</dbReference>
<dbReference type="Pfam" id="PF21467">
    <property type="entry name" value="BetaGal_gal-bd"/>
    <property type="match status" value="1"/>
</dbReference>
<dbReference type="Pfam" id="PF01301">
    <property type="entry name" value="Glyco_hydro_35"/>
    <property type="match status" value="1"/>
</dbReference>
<dbReference type="PIRSF" id="PIRSF006336">
    <property type="entry name" value="B-gal"/>
    <property type="match status" value="1"/>
</dbReference>
<dbReference type="PRINTS" id="PR00742">
    <property type="entry name" value="GLHYDRLASE35"/>
</dbReference>
<dbReference type="SUPFAM" id="SSF51445">
    <property type="entry name" value="(Trans)glycosidases"/>
    <property type="match status" value="1"/>
</dbReference>
<dbReference type="SUPFAM" id="SSF49785">
    <property type="entry name" value="Galactose-binding domain-like"/>
    <property type="match status" value="1"/>
</dbReference>
<dbReference type="PROSITE" id="PS01182">
    <property type="entry name" value="GLYCOSYL_HYDROL_F35"/>
    <property type="match status" value="1"/>
</dbReference>
<protein>
    <recommendedName>
        <fullName>Beta-galactosidase-1-like protein 3</fullName>
        <ecNumber>3.2.1.-</ecNumber>
    </recommendedName>
</protein>
<evidence type="ECO:0000250" key="1"/>
<evidence type="ECO:0000305" key="2"/>
<gene>
    <name type="primary">Glb1l3</name>
</gene>
<sequence>MAIFFLPLVLPGFAPRSEDSFKSPARFSWSYLNPSKLKKRSVGLSTETNAHGQAYFTLEGHKFMIVGGSIHYFRVPREYWKDRLLKLQACGFNTVTTYIPWNLHEQERGKFDFSEILDLEAYVLLAKTLGLWVILRPGPYICAEVDLGGLPSWLLRNPGSNLRTTNKDFIEAVDKYFDHLIPKILPLQYRRGGPVIAVQVENEYGSFRNDKNYMEYIKKALLNRGIVELLLTSDNESGIRIGSVKGALATINVNSFIKDSFVKLHRMQNDKPIMIMEYWTGWYDSWGSKHTEKSANEIRRTIYRFFSYGLSFNVYMFHGGTNFGFINGGYHENGHTNVVTSYDYDAVLSEAGDYTEKYFKLRKLFASGSARPLPPLPRLIPKAVYPSVNLSFYLPLFDILPYLNKPVMLETPVTMENLPINNGSGQPFGLVLYETSICFGGGLSASVHDSAQVFLNDKSIGILDENNEFLHIPKIQGCQLLRILVENQGRINFSWRIQSEQKGLNEAVTINGTLLRNFTIYSLDMKMSFFERLRSASWRIAPKTYKGPAFYWGSLNVGSFPTDTFLHLPNWHYGFVFINGRNLGRYWDIGPQKTLYLPGPWLHPEDNDVIVFEKIEKGFYIQTRKKPQLQN</sequence>
<name>GLBL3_RAT</name>
<keyword id="KW-0326">Glycosidase</keyword>
<keyword id="KW-0378">Hydrolase</keyword>
<keyword id="KW-1185">Reference proteome</keyword>